<comment type="function">
    <text evidence="1">Catalyzes the stereoinversion of LL-2,6-diaminopimelate (L,L-DAP) to meso-diaminopimelate (meso-DAP), a precursor of L-lysine.</text>
</comment>
<comment type="catalytic activity">
    <reaction evidence="1">
        <text>(2S,6S)-2,6-diaminopimelate = meso-2,6-diaminopimelate</text>
        <dbReference type="Rhea" id="RHEA:15393"/>
        <dbReference type="ChEBI" id="CHEBI:57609"/>
        <dbReference type="ChEBI" id="CHEBI:57791"/>
        <dbReference type="EC" id="5.1.1.7"/>
    </reaction>
</comment>
<comment type="pathway">
    <text evidence="1">Amino-acid biosynthesis; L-lysine biosynthesis via DAP pathway; DL-2,6-diaminopimelate from LL-2,6-diaminopimelate: step 1/1.</text>
</comment>
<comment type="subunit">
    <text evidence="1">Homodimer.</text>
</comment>
<comment type="subcellular location">
    <subcellularLocation>
        <location evidence="1">Cytoplasm</location>
    </subcellularLocation>
</comment>
<comment type="similarity">
    <text evidence="1">Belongs to the diaminopimelate epimerase family.</text>
</comment>
<dbReference type="EC" id="5.1.1.7" evidence="1"/>
<dbReference type="EMBL" id="AE009439">
    <property type="protein sequence ID" value="AAM01649.1"/>
    <property type="molecule type" value="Genomic_DNA"/>
</dbReference>
<dbReference type="RefSeq" id="WP_011018804.1">
    <property type="nucleotide sequence ID" value="NC_003551.1"/>
</dbReference>
<dbReference type="SMR" id="Q8TY71"/>
<dbReference type="FunCoup" id="Q8TY71">
    <property type="interactions" value="151"/>
</dbReference>
<dbReference type="STRING" id="190192.MK0434"/>
<dbReference type="PaxDb" id="190192-MK0434"/>
<dbReference type="EnsemblBacteria" id="AAM01649">
    <property type="protein sequence ID" value="AAM01649"/>
    <property type="gene ID" value="MK0434"/>
</dbReference>
<dbReference type="GeneID" id="1477737"/>
<dbReference type="KEGG" id="mka:MK0434"/>
<dbReference type="PATRIC" id="fig|190192.8.peg.463"/>
<dbReference type="HOGENOM" id="CLU_053306_3_1_2"/>
<dbReference type="InParanoid" id="Q8TY71"/>
<dbReference type="OrthoDB" id="358699at2157"/>
<dbReference type="UniPathway" id="UPA00034">
    <property type="reaction ID" value="UER00025"/>
</dbReference>
<dbReference type="Proteomes" id="UP000001826">
    <property type="component" value="Chromosome"/>
</dbReference>
<dbReference type="GO" id="GO:0005829">
    <property type="term" value="C:cytosol"/>
    <property type="evidence" value="ECO:0007669"/>
    <property type="project" value="TreeGrafter"/>
</dbReference>
<dbReference type="GO" id="GO:0008837">
    <property type="term" value="F:diaminopimelate epimerase activity"/>
    <property type="evidence" value="ECO:0007669"/>
    <property type="project" value="UniProtKB-UniRule"/>
</dbReference>
<dbReference type="GO" id="GO:0009089">
    <property type="term" value="P:lysine biosynthetic process via diaminopimelate"/>
    <property type="evidence" value="ECO:0007669"/>
    <property type="project" value="UniProtKB-UniRule"/>
</dbReference>
<dbReference type="Gene3D" id="3.10.310.10">
    <property type="entry name" value="Diaminopimelate Epimerase, Chain A, domain 1"/>
    <property type="match status" value="2"/>
</dbReference>
<dbReference type="HAMAP" id="MF_00197">
    <property type="entry name" value="DAP_epimerase"/>
    <property type="match status" value="1"/>
</dbReference>
<dbReference type="InterPro" id="IPR018510">
    <property type="entry name" value="DAP_epimerase_AS"/>
</dbReference>
<dbReference type="InterPro" id="IPR001653">
    <property type="entry name" value="DAP_epimerase_DapF"/>
</dbReference>
<dbReference type="NCBIfam" id="TIGR00652">
    <property type="entry name" value="DapF"/>
    <property type="match status" value="1"/>
</dbReference>
<dbReference type="PANTHER" id="PTHR31689:SF0">
    <property type="entry name" value="DIAMINOPIMELATE EPIMERASE"/>
    <property type="match status" value="1"/>
</dbReference>
<dbReference type="PANTHER" id="PTHR31689">
    <property type="entry name" value="DIAMINOPIMELATE EPIMERASE, CHLOROPLASTIC"/>
    <property type="match status" value="1"/>
</dbReference>
<dbReference type="Pfam" id="PF01678">
    <property type="entry name" value="DAP_epimerase"/>
    <property type="match status" value="1"/>
</dbReference>
<dbReference type="SUPFAM" id="SSF54506">
    <property type="entry name" value="Diaminopimelate epimerase-like"/>
    <property type="match status" value="2"/>
</dbReference>
<dbReference type="PROSITE" id="PS01326">
    <property type="entry name" value="DAP_EPIMERASE"/>
    <property type="match status" value="1"/>
</dbReference>
<sequence length="279" mass="30994">MQFWKVHGARNDFVLVDETEEEVVPESDKPDFARWACDRRSGVGADGVVFIRSDPPSVEMRIFNRDGSEAEFCGNAARCVVKYVTEVRGENVKILRTLSGAHRVEVQGGWIAVEVPEAEIKKVVELGYEVDAGVPHFVRLTERDPIHDFGGLTDEAKTIFSEYEPKGGVNVTYAAPSVDELRVRTFERGVGWTPACGSGVVAASLVYSEIFGPFEEVSVRTAGGCLRVSLSDGPLLIGRAEIVYKGELRGDWRENTDHQRRRHSLSRSPSGRPRLQECR</sequence>
<name>DAPF_METKA</name>
<feature type="chain" id="PRO_0000149887" description="Diaminopimelate epimerase">
    <location>
        <begin position="1"/>
        <end position="279"/>
    </location>
</feature>
<feature type="region of interest" description="Disordered" evidence="2">
    <location>
        <begin position="255"/>
        <end position="279"/>
    </location>
</feature>
<feature type="active site" description="Proton donor" evidence="1">
    <location>
        <position position="73"/>
    </location>
</feature>
<feature type="active site" description="Proton acceptor" evidence="1">
    <location>
        <position position="196"/>
    </location>
</feature>
<feature type="binding site" evidence="1">
    <location>
        <position position="11"/>
    </location>
    <ligand>
        <name>substrate</name>
    </ligand>
</feature>
<feature type="binding site" evidence="1">
    <location>
        <position position="64"/>
    </location>
    <ligand>
        <name>substrate</name>
    </ligand>
</feature>
<feature type="binding site" evidence="1">
    <location>
        <begin position="74"/>
        <end position="75"/>
    </location>
    <ligand>
        <name>substrate</name>
    </ligand>
</feature>
<feature type="binding site" evidence="1">
    <location>
        <position position="170"/>
    </location>
    <ligand>
        <name>substrate</name>
    </ligand>
</feature>
<feature type="binding site" evidence="1">
    <location>
        <begin position="187"/>
        <end position="188"/>
    </location>
    <ligand>
        <name>substrate</name>
    </ligand>
</feature>
<feature type="binding site" evidence="1">
    <location>
        <begin position="197"/>
        <end position="198"/>
    </location>
    <ligand>
        <name>substrate</name>
    </ligand>
</feature>
<feature type="site" description="Could be important to modulate the pK values of the two catalytic cysteine residues" evidence="1">
    <location>
        <position position="136"/>
    </location>
</feature>
<feature type="site" description="Could be important to modulate the pK values of the two catalytic cysteine residues" evidence="1">
    <location>
        <position position="187"/>
    </location>
</feature>
<reference key="1">
    <citation type="journal article" date="2002" name="Proc. Natl. Acad. Sci. U.S.A.">
        <title>The complete genome of hyperthermophile Methanopyrus kandleri AV19 and monophyly of archaeal methanogens.</title>
        <authorList>
            <person name="Slesarev A.I."/>
            <person name="Mezhevaya K.V."/>
            <person name="Makarova K.S."/>
            <person name="Polushin N.N."/>
            <person name="Shcherbinina O.V."/>
            <person name="Shakhova V.V."/>
            <person name="Belova G.I."/>
            <person name="Aravind L."/>
            <person name="Natale D.A."/>
            <person name="Rogozin I.B."/>
            <person name="Tatusov R.L."/>
            <person name="Wolf Y.I."/>
            <person name="Stetter K.O."/>
            <person name="Malykh A.G."/>
            <person name="Koonin E.V."/>
            <person name="Kozyavkin S.A."/>
        </authorList>
    </citation>
    <scope>NUCLEOTIDE SEQUENCE [LARGE SCALE GENOMIC DNA]</scope>
    <source>
        <strain>AV19 / DSM 6324 / JCM 9639 / NBRC 100938</strain>
    </source>
</reference>
<proteinExistence type="inferred from homology"/>
<accession>Q8TY71</accession>
<protein>
    <recommendedName>
        <fullName evidence="1">Diaminopimelate epimerase</fullName>
        <shortName evidence="1">DAP epimerase</shortName>
        <ecNumber evidence="1">5.1.1.7</ecNumber>
    </recommendedName>
    <alternativeName>
        <fullName evidence="1">PLP-independent amino acid racemase</fullName>
    </alternativeName>
</protein>
<keyword id="KW-0028">Amino-acid biosynthesis</keyword>
<keyword id="KW-0963">Cytoplasm</keyword>
<keyword id="KW-0413">Isomerase</keyword>
<keyword id="KW-0457">Lysine biosynthesis</keyword>
<keyword id="KW-1185">Reference proteome</keyword>
<organism>
    <name type="scientific">Methanopyrus kandleri (strain AV19 / DSM 6324 / JCM 9639 / NBRC 100938)</name>
    <dbReference type="NCBI Taxonomy" id="190192"/>
    <lineage>
        <taxon>Archaea</taxon>
        <taxon>Methanobacteriati</taxon>
        <taxon>Methanobacteriota</taxon>
        <taxon>Methanomada group</taxon>
        <taxon>Methanopyri</taxon>
        <taxon>Methanopyrales</taxon>
        <taxon>Methanopyraceae</taxon>
        <taxon>Methanopyrus</taxon>
    </lineage>
</organism>
<evidence type="ECO:0000255" key="1">
    <source>
        <dbReference type="HAMAP-Rule" id="MF_00197"/>
    </source>
</evidence>
<evidence type="ECO:0000256" key="2">
    <source>
        <dbReference type="SAM" id="MobiDB-lite"/>
    </source>
</evidence>
<gene>
    <name evidence="1" type="primary">dapF</name>
    <name type="ordered locus">MK0434</name>
</gene>